<proteinExistence type="evidence at transcript level"/>
<dbReference type="EMBL" id="AY499345">
    <property type="protein sequence ID" value="AAR91751.1"/>
    <property type="molecule type" value="mRNA"/>
</dbReference>
<dbReference type="SMR" id="Q6RG77"/>
<dbReference type="FunCoup" id="Q6RG77">
    <property type="interactions" value="2706"/>
</dbReference>
<dbReference type="STRING" id="9796.ENSECAP00000007041"/>
<dbReference type="PaxDb" id="9796-ENSECAP00000007041"/>
<dbReference type="InParanoid" id="Q6RG77"/>
<dbReference type="Proteomes" id="UP000002281">
    <property type="component" value="Unplaced"/>
</dbReference>
<dbReference type="GO" id="GO:0016602">
    <property type="term" value="C:CCAAT-binding factor complex"/>
    <property type="evidence" value="ECO:0000318"/>
    <property type="project" value="GO_Central"/>
</dbReference>
<dbReference type="GO" id="GO:0001228">
    <property type="term" value="F:DNA-binding transcription activator activity, RNA polymerase II-specific"/>
    <property type="evidence" value="ECO:0007669"/>
    <property type="project" value="InterPro"/>
</dbReference>
<dbReference type="GO" id="GO:0000981">
    <property type="term" value="F:DNA-binding transcription factor activity, RNA polymerase II-specific"/>
    <property type="evidence" value="ECO:0000318"/>
    <property type="project" value="GO_Central"/>
</dbReference>
<dbReference type="GO" id="GO:0046982">
    <property type="term" value="F:protein heterodimerization activity"/>
    <property type="evidence" value="ECO:0007669"/>
    <property type="project" value="InterPro"/>
</dbReference>
<dbReference type="GO" id="GO:0043565">
    <property type="term" value="F:sequence-specific DNA binding"/>
    <property type="evidence" value="ECO:0007669"/>
    <property type="project" value="InterPro"/>
</dbReference>
<dbReference type="GO" id="GO:0006357">
    <property type="term" value="P:regulation of transcription by RNA polymerase II"/>
    <property type="evidence" value="ECO:0000318"/>
    <property type="project" value="GO_Central"/>
</dbReference>
<dbReference type="CDD" id="cd22907">
    <property type="entry name" value="HFD_NFYB"/>
    <property type="match status" value="1"/>
</dbReference>
<dbReference type="FunFam" id="1.10.20.10:FF:000027">
    <property type="entry name" value="Nuclear transcription factor Y subunit beta"/>
    <property type="match status" value="1"/>
</dbReference>
<dbReference type="Gene3D" id="1.10.20.10">
    <property type="entry name" value="Histone, subunit A"/>
    <property type="match status" value="1"/>
</dbReference>
<dbReference type="InterPro" id="IPR003958">
    <property type="entry name" value="CBFA_NFYB_domain"/>
</dbReference>
<dbReference type="InterPro" id="IPR009072">
    <property type="entry name" value="Histone-fold"/>
</dbReference>
<dbReference type="InterPro" id="IPR027113">
    <property type="entry name" value="Transc_fact_NFYB/HAP3"/>
</dbReference>
<dbReference type="InterPro" id="IPR003956">
    <property type="entry name" value="Transcrpt_fac_NFYB/HAP3_CS"/>
</dbReference>
<dbReference type="PANTHER" id="PTHR11064">
    <property type="entry name" value="CCAAT-BINDING TRANSCRIPTION FACTOR-RELATED"/>
    <property type="match status" value="1"/>
</dbReference>
<dbReference type="PANTHER" id="PTHR11064:SF195">
    <property type="entry name" value="NUCLEAR TRANSCRIPTION FACTOR Y SUBUNIT BETA"/>
    <property type="match status" value="1"/>
</dbReference>
<dbReference type="Pfam" id="PF00808">
    <property type="entry name" value="CBFD_NFYB_HMF"/>
    <property type="match status" value="1"/>
</dbReference>
<dbReference type="PRINTS" id="PR00615">
    <property type="entry name" value="CCAATSUBUNTA"/>
</dbReference>
<dbReference type="SUPFAM" id="SSF47113">
    <property type="entry name" value="Histone-fold"/>
    <property type="match status" value="1"/>
</dbReference>
<dbReference type="PROSITE" id="PS00685">
    <property type="entry name" value="NFYB_HAP3"/>
    <property type="match status" value="1"/>
</dbReference>
<feature type="chain" id="PRO_0000204608" description="Nuclear transcription factor Y subunit beta">
    <location>
        <begin position="1"/>
        <end position="207"/>
    </location>
</feature>
<feature type="DNA-binding region" evidence="1">
    <location>
        <begin position="59"/>
        <end position="65"/>
    </location>
</feature>
<feature type="region of interest" description="A domain">
    <location>
        <begin position="1"/>
        <end position="52"/>
    </location>
</feature>
<feature type="region of interest" description="Disordered" evidence="3">
    <location>
        <begin position="27"/>
        <end position="52"/>
    </location>
</feature>
<feature type="region of interest" description="B domain">
    <location>
        <begin position="53"/>
        <end position="142"/>
    </location>
</feature>
<feature type="region of interest" description="Subunit association domain (SAD)" evidence="1">
    <location>
        <begin position="86"/>
        <end position="97"/>
    </location>
</feature>
<feature type="region of interest" description="C domain">
    <location>
        <begin position="143"/>
        <end position="207"/>
    </location>
</feature>
<feature type="compositionally biased region" description="Basic and acidic residues" evidence="3">
    <location>
        <begin position="39"/>
        <end position="52"/>
    </location>
</feature>
<feature type="cross-link" description="Glycyl lysine isopeptide (Lys-Gly) (interchain with G-Cter in ubiquitin)" evidence="2">
    <location>
        <position position="140"/>
    </location>
</feature>
<sequence length="207" mass="22780">MTMDGDSSTTDASQLGISADYIGGSHYVIQPHDDTEDSMNDHEDTNGSKESFREQDIYLPIANVARIMKNAIPQTGKIAKDAKECVQECVSEFISFITSEASERCHQEKRKTINGEDILFAMSTLGFDSYVEPLKLYLQKFREAMKGEKGIGGAVTATDGLSEELAEEAFTNQLPAGLITADGQQQNVMVYTTSYHQISGVQQIQFS</sequence>
<protein>
    <recommendedName>
        <fullName>Nuclear transcription factor Y subunit beta</fullName>
    </recommendedName>
    <alternativeName>
        <fullName>CAAT box DNA-binding protein subunit B</fullName>
    </alternativeName>
    <alternativeName>
        <fullName>Nuclear transcription factor Y subunit B</fullName>
        <shortName>NF-YB</shortName>
    </alternativeName>
</protein>
<name>NFYB_HORSE</name>
<reference key="1">
    <citation type="submission" date="2003-12" db="EMBL/GenBank/DDBJ databases">
        <title>Equus caballus nuclear transcription factor-Y beta (NFYb) mRNA.</title>
        <authorList>
            <person name="Takafuji V.A."/>
            <person name="Woody S.L."/>
            <person name="Crisman M.V."/>
            <person name="Howard R.D."/>
        </authorList>
    </citation>
    <scope>NUCLEOTIDE SEQUENCE [MRNA]</scope>
</reference>
<accession>Q6RG77</accession>
<comment type="function">
    <text evidence="1">Component of the sequence-specific heterotrimeric transcription factor (NF-Y) which specifically recognizes a 5'-CCAAT-3' box motif found in the promoters of its target genes. NF-Y can function as both an activator and a repressor, depending on its interacting cofactors (By similarity).</text>
</comment>
<comment type="subunit">
    <text evidence="1">Heterotrimeric transcription factor composed of three components, NF-YA, NF-YB and NF-YC. NF-YB and NF-YC must interact and dimerize for NF-YA association and DNA binding. Interacts with C1QBP (By similarity).</text>
</comment>
<comment type="subcellular location">
    <subcellularLocation>
        <location evidence="1">Nucleus</location>
    </subcellularLocation>
</comment>
<comment type="domain">
    <text>Can be divided into 3 domains: the weakly conserved A domain, the highly conserved B domain thought to be involved in subunit interaction and DNA binding, and the Glu-rich C domain.</text>
</comment>
<comment type="PTM">
    <text evidence="1">Monoubiquitination at Lys-140 plays an important role in transcriptional activation by allowing the deposition of histone H3 methylations as well as histone H2B monoubiquitination at 'Lys-121'.</text>
</comment>
<comment type="similarity">
    <text evidence="4">Belongs to the NFYB/HAP3 subunit family.</text>
</comment>
<evidence type="ECO:0000250" key="1"/>
<evidence type="ECO:0000250" key="2">
    <source>
        <dbReference type="UniProtKB" id="P25208"/>
    </source>
</evidence>
<evidence type="ECO:0000256" key="3">
    <source>
        <dbReference type="SAM" id="MobiDB-lite"/>
    </source>
</evidence>
<evidence type="ECO:0000305" key="4"/>
<gene>
    <name type="primary">NFYB</name>
</gene>
<organism>
    <name type="scientific">Equus caballus</name>
    <name type="common">Horse</name>
    <dbReference type="NCBI Taxonomy" id="9796"/>
    <lineage>
        <taxon>Eukaryota</taxon>
        <taxon>Metazoa</taxon>
        <taxon>Chordata</taxon>
        <taxon>Craniata</taxon>
        <taxon>Vertebrata</taxon>
        <taxon>Euteleostomi</taxon>
        <taxon>Mammalia</taxon>
        <taxon>Eutheria</taxon>
        <taxon>Laurasiatheria</taxon>
        <taxon>Perissodactyla</taxon>
        <taxon>Equidae</taxon>
        <taxon>Equus</taxon>
    </lineage>
</organism>
<keyword id="KW-0010">Activator</keyword>
<keyword id="KW-0238">DNA-binding</keyword>
<keyword id="KW-1017">Isopeptide bond</keyword>
<keyword id="KW-0539">Nucleus</keyword>
<keyword id="KW-1185">Reference proteome</keyword>
<keyword id="KW-0804">Transcription</keyword>
<keyword id="KW-0805">Transcription regulation</keyword>
<keyword id="KW-0832">Ubl conjugation</keyword>